<dbReference type="GO" id="GO:0005576">
    <property type="term" value="C:extracellular region"/>
    <property type="evidence" value="ECO:0000250"/>
    <property type="project" value="UniProtKB"/>
</dbReference>
<dbReference type="GO" id="GO:0007218">
    <property type="term" value="P:neuropeptide signaling pathway"/>
    <property type="evidence" value="ECO:0007669"/>
    <property type="project" value="UniProtKB-KW"/>
</dbReference>
<protein>
    <recommendedName>
        <fullName evidence="3">Allatotropin-related peptide</fullName>
        <shortName evidence="3">ATRP</shortName>
    </recommendedName>
</protein>
<feature type="peptide" id="PRO_0000395622" description="Allatotropin-related peptide" evidence="2">
    <location>
        <begin position="1"/>
        <end position="13"/>
    </location>
</feature>
<feature type="modified residue" description="Phenylalanine amide" evidence="2">
    <location>
        <position position="13"/>
    </location>
</feature>
<sequence>GFKNVALSTARGF</sequence>
<organism>
    <name type="scientific">Nezara viridula</name>
    <name type="common">Southern green stink bug</name>
    <name type="synonym">Cimex viridulus</name>
    <dbReference type="NCBI Taxonomy" id="85310"/>
    <lineage>
        <taxon>Eukaryota</taxon>
        <taxon>Metazoa</taxon>
        <taxon>Ecdysozoa</taxon>
        <taxon>Arthropoda</taxon>
        <taxon>Hexapoda</taxon>
        <taxon>Insecta</taxon>
        <taxon>Pterygota</taxon>
        <taxon>Neoptera</taxon>
        <taxon>Paraneoptera</taxon>
        <taxon>Hemiptera</taxon>
        <taxon>Heteroptera</taxon>
        <taxon>Panheteroptera</taxon>
        <taxon>Pentatomomorpha</taxon>
        <taxon>Pentatomoidea</taxon>
        <taxon>Pentatomidae</taxon>
        <taxon>Pentatominae</taxon>
        <taxon>Nezara</taxon>
    </lineage>
</organism>
<keyword id="KW-0027">Amidation</keyword>
<keyword id="KW-0903">Direct protein sequencing</keyword>
<keyword id="KW-0527">Neuropeptide</keyword>
<keyword id="KW-0964">Secreted</keyword>
<comment type="subcellular location">
    <subcellularLocation>
        <location evidence="1">Secreted</location>
    </subcellularLocation>
</comment>
<comment type="tissue specificity">
    <text evidence="2">Expressed in the posterior region of the abdominal ventral nerve cord and in the fourth abdominal nerves (at protein level).</text>
</comment>
<comment type="mass spectrometry"/>
<evidence type="ECO:0000250" key="1">
    <source>
        <dbReference type="UniProtKB" id="P21786"/>
    </source>
</evidence>
<evidence type="ECO:0000269" key="2">
    <source>
    </source>
</evidence>
<evidence type="ECO:0000303" key="3">
    <source>
    </source>
</evidence>
<evidence type="ECO:0000305" key="4"/>
<proteinExistence type="evidence at protein level"/>
<name>ALLTR_NEZVI</name>
<accession>P86556</accession>
<reference evidence="4" key="1">
    <citation type="journal article" date="2009" name="Peptides">
        <title>Neuropeptides in Heteroptera: identification of allatotropin-related peptide and tachykinin-related peptides using MALDI-TOF mass spectrometry.</title>
        <authorList>
            <person name="Neupert S."/>
            <person name="Russell W.K."/>
            <person name="Russell D.H."/>
            <person name="Lopez J.D. Jr."/>
            <person name="Predel R."/>
            <person name="Nachman R.J."/>
        </authorList>
    </citation>
    <scope>PROTEIN SEQUENCE</scope>
    <scope>TISSUE SPECIFICITY</scope>
    <scope>MASS SPECTROMETRY</scope>
    <scope>AMIDATION AT PHE-13</scope>
    <source>
        <tissue evidence="2">Ventral nerve cord</tissue>
    </source>
</reference>